<sequence>MGENMIKSEDLVFKYVNAEEQTEKVAINHVSMEVKKGEFLVILGHNGSGKSTMAKHMNALLLPSGGKMYVDGLDTSDIENLWEVRRRAGMVFQNPDNQLVATIVEEDVAFGPENLGVDPKEIRERVDDSLKAVGMYEYRKHAPHLLSGGQKQRIAIAGILAMRPKCIVLDEPTAMLDPSGRNEVMKTIKEVNKKFGITIILITHYMDEAAQADRIIVMDKGEKVMEGVPREIFSQVEKIKSIGLDVPQVTELAYELQKEGVDISTEILNIDEMVNALCQLK</sequence>
<accession>Q8XHV2</accession>
<dbReference type="EC" id="7.-.-.-" evidence="1"/>
<dbReference type="EMBL" id="BA000016">
    <property type="protein sequence ID" value="BAB82080.1"/>
    <property type="molecule type" value="Genomic_DNA"/>
</dbReference>
<dbReference type="RefSeq" id="WP_003454376.1">
    <property type="nucleotide sequence ID" value="NC_003366.1"/>
</dbReference>
<dbReference type="SMR" id="Q8XHV2"/>
<dbReference type="STRING" id="195102.gene:10491691"/>
<dbReference type="KEGG" id="cpe:CPE2374"/>
<dbReference type="HOGENOM" id="CLU_000604_1_22_9"/>
<dbReference type="Proteomes" id="UP000000818">
    <property type="component" value="Chromosome"/>
</dbReference>
<dbReference type="GO" id="GO:0043190">
    <property type="term" value="C:ATP-binding cassette (ABC) transporter complex"/>
    <property type="evidence" value="ECO:0007669"/>
    <property type="project" value="TreeGrafter"/>
</dbReference>
<dbReference type="GO" id="GO:0005524">
    <property type="term" value="F:ATP binding"/>
    <property type="evidence" value="ECO:0007669"/>
    <property type="project" value="UniProtKB-KW"/>
</dbReference>
<dbReference type="GO" id="GO:0016887">
    <property type="term" value="F:ATP hydrolysis activity"/>
    <property type="evidence" value="ECO:0007669"/>
    <property type="project" value="InterPro"/>
</dbReference>
<dbReference type="GO" id="GO:0042626">
    <property type="term" value="F:ATPase-coupled transmembrane transporter activity"/>
    <property type="evidence" value="ECO:0007669"/>
    <property type="project" value="TreeGrafter"/>
</dbReference>
<dbReference type="CDD" id="cd03225">
    <property type="entry name" value="ABC_cobalt_CbiO_domain1"/>
    <property type="match status" value="1"/>
</dbReference>
<dbReference type="FunFam" id="3.40.50.300:FF:000224">
    <property type="entry name" value="Energy-coupling factor transporter ATP-binding protein EcfA"/>
    <property type="match status" value="1"/>
</dbReference>
<dbReference type="Gene3D" id="3.40.50.300">
    <property type="entry name" value="P-loop containing nucleotide triphosphate hydrolases"/>
    <property type="match status" value="1"/>
</dbReference>
<dbReference type="InterPro" id="IPR003593">
    <property type="entry name" value="AAA+_ATPase"/>
</dbReference>
<dbReference type="InterPro" id="IPR003439">
    <property type="entry name" value="ABC_transporter-like_ATP-bd"/>
</dbReference>
<dbReference type="InterPro" id="IPR017871">
    <property type="entry name" value="ABC_transporter-like_CS"/>
</dbReference>
<dbReference type="InterPro" id="IPR015856">
    <property type="entry name" value="ABC_transpr_CbiO/EcfA_su"/>
</dbReference>
<dbReference type="InterPro" id="IPR050095">
    <property type="entry name" value="ECF_ABC_transporter_ATP-bd"/>
</dbReference>
<dbReference type="InterPro" id="IPR030947">
    <property type="entry name" value="EcfA_1"/>
</dbReference>
<dbReference type="InterPro" id="IPR027417">
    <property type="entry name" value="P-loop_NTPase"/>
</dbReference>
<dbReference type="NCBIfam" id="TIGR04520">
    <property type="entry name" value="ECF_ATPase_1"/>
    <property type="match status" value="1"/>
</dbReference>
<dbReference type="NCBIfam" id="NF010167">
    <property type="entry name" value="PRK13648.1"/>
    <property type="match status" value="1"/>
</dbReference>
<dbReference type="PANTHER" id="PTHR43553:SF24">
    <property type="entry name" value="ENERGY-COUPLING FACTOR TRANSPORTER ATP-BINDING PROTEIN ECFA1"/>
    <property type="match status" value="1"/>
</dbReference>
<dbReference type="PANTHER" id="PTHR43553">
    <property type="entry name" value="HEAVY METAL TRANSPORTER"/>
    <property type="match status" value="1"/>
</dbReference>
<dbReference type="Pfam" id="PF00005">
    <property type="entry name" value="ABC_tran"/>
    <property type="match status" value="1"/>
</dbReference>
<dbReference type="SMART" id="SM00382">
    <property type="entry name" value="AAA"/>
    <property type="match status" value="1"/>
</dbReference>
<dbReference type="SUPFAM" id="SSF52540">
    <property type="entry name" value="P-loop containing nucleoside triphosphate hydrolases"/>
    <property type="match status" value="1"/>
</dbReference>
<dbReference type="PROSITE" id="PS00211">
    <property type="entry name" value="ABC_TRANSPORTER_1"/>
    <property type="match status" value="1"/>
</dbReference>
<dbReference type="PROSITE" id="PS50893">
    <property type="entry name" value="ABC_TRANSPORTER_2"/>
    <property type="match status" value="1"/>
</dbReference>
<dbReference type="PROSITE" id="PS51246">
    <property type="entry name" value="CBIO"/>
    <property type="match status" value="1"/>
</dbReference>
<name>ECFA1_CLOPE</name>
<keyword id="KW-0067">ATP-binding</keyword>
<keyword id="KW-1003">Cell membrane</keyword>
<keyword id="KW-0472">Membrane</keyword>
<keyword id="KW-0547">Nucleotide-binding</keyword>
<keyword id="KW-1185">Reference proteome</keyword>
<keyword id="KW-1278">Translocase</keyword>
<keyword id="KW-0813">Transport</keyword>
<proteinExistence type="inferred from homology"/>
<feature type="chain" id="PRO_0000091999" description="Energy-coupling factor transporter ATP-binding protein EcfA1">
    <location>
        <begin position="1"/>
        <end position="281"/>
    </location>
</feature>
<feature type="domain" description="ABC transporter" evidence="1">
    <location>
        <begin position="6"/>
        <end position="245"/>
    </location>
</feature>
<feature type="binding site" evidence="1">
    <location>
        <begin position="44"/>
        <end position="51"/>
    </location>
    <ligand>
        <name>ATP</name>
        <dbReference type="ChEBI" id="CHEBI:30616"/>
    </ligand>
</feature>
<gene>
    <name evidence="1" type="primary">ecfA1</name>
    <name type="synonym">cbiO1</name>
    <name type="ordered locus">CPE2374</name>
</gene>
<reference key="1">
    <citation type="journal article" date="2002" name="Proc. Natl. Acad. Sci. U.S.A.">
        <title>Complete genome sequence of Clostridium perfringens, an anaerobic flesh-eater.</title>
        <authorList>
            <person name="Shimizu T."/>
            <person name="Ohtani K."/>
            <person name="Hirakawa H."/>
            <person name="Ohshima K."/>
            <person name="Yamashita A."/>
            <person name="Shiba T."/>
            <person name="Ogasawara N."/>
            <person name="Hattori M."/>
            <person name="Kuhara S."/>
            <person name="Hayashi H."/>
        </authorList>
    </citation>
    <scope>NUCLEOTIDE SEQUENCE [LARGE SCALE GENOMIC DNA]</scope>
    <source>
        <strain>13 / Type A</strain>
    </source>
</reference>
<evidence type="ECO:0000255" key="1">
    <source>
        <dbReference type="HAMAP-Rule" id="MF_01710"/>
    </source>
</evidence>
<protein>
    <recommendedName>
        <fullName evidence="1">Energy-coupling factor transporter ATP-binding protein EcfA1</fullName>
        <shortName evidence="1">ECF transporter A component EcfA1</shortName>
        <ecNumber evidence="1">7.-.-.-</ecNumber>
    </recommendedName>
</protein>
<comment type="function">
    <text evidence="1">ATP-binding (A) component of a common energy-coupling factor (ECF) ABC-transporter complex. Unlike classic ABC transporters this ECF transporter provides the energy necessary to transport a number of different substrates.</text>
</comment>
<comment type="subunit">
    <text evidence="1">Forms a stable energy-coupling factor (ECF) transporter complex composed of 2 membrane-embedded substrate-binding proteins (S component), 2 ATP-binding proteins (A component) and 2 transmembrane proteins (T component).</text>
</comment>
<comment type="subcellular location">
    <subcellularLocation>
        <location evidence="1">Cell membrane</location>
        <topology evidence="1">Peripheral membrane protein</topology>
    </subcellularLocation>
</comment>
<comment type="similarity">
    <text evidence="1">Belongs to the ABC transporter superfamily. Energy-coupling factor EcfA family.</text>
</comment>
<organism>
    <name type="scientific">Clostridium perfringens (strain 13 / Type A)</name>
    <dbReference type="NCBI Taxonomy" id="195102"/>
    <lineage>
        <taxon>Bacteria</taxon>
        <taxon>Bacillati</taxon>
        <taxon>Bacillota</taxon>
        <taxon>Clostridia</taxon>
        <taxon>Eubacteriales</taxon>
        <taxon>Clostridiaceae</taxon>
        <taxon>Clostridium</taxon>
    </lineage>
</organism>